<proteinExistence type="evidence at protein level"/>
<gene>
    <name type="primary">Khsrp</name>
    <name type="synonym">Fubp2</name>
</gene>
<comment type="function">
    <text evidence="1 6">Part of a ternary complex that binds to the downstream control sequence (DCS) of the pre-mRNA. Mediates exon inclusion in transcripts that are subject to tissue-specific alternative splicing. May interact with single-stranded DNA from the far-upstream element (FUSE). May activate gene expression. Also involved in degradation of inherently unstable mRNAs that contain AU-rich elements (AREs) in their 3'-UTR, possibly by recruiting degradation machinery to ARE-containing mRNAs (By similarity). Binds to the dendritic targeting element and may play a role in mRNA trafficking.</text>
</comment>
<comment type="subunit">
    <text evidence="3">Part of a ternary complex containing FUBP2, PTBP1, PTBP2 and HNRPH1. Interacts with PARN. Interacts with PQBP1.</text>
</comment>
<comment type="subcellular location">
    <subcellularLocation>
        <location evidence="6">Nucleus</location>
    </subcellularLocation>
    <subcellularLocation>
        <location evidence="6">Cytoplasm</location>
    </subcellularLocation>
    <text>A small proportion is also found in the cytoplasm of neuronal cell bodies and dendrites.</text>
</comment>
<comment type="similarity">
    <text evidence="7">Belongs to the KHSRP family.</text>
</comment>
<keyword id="KW-0007">Acetylation</keyword>
<keyword id="KW-0963">Cytoplasm</keyword>
<keyword id="KW-0903">Direct protein sequencing</keyword>
<keyword id="KW-0238">DNA-binding</keyword>
<keyword id="KW-1017">Isopeptide bond</keyword>
<keyword id="KW-0488">Methylation</keyword>
<keyword id="KW-0507">mRNA processing</keyword>
<keyword id="KW-0508">mRNA splicing</keyword>
<keyword id="KW-0509">mRNA transport</keyword>
<keyword id="KW-0539">Nucleus</keyword>
<keyword id="KW-0597">Phosphoprotein</keyword>
<keyword id="KW-1185">Reference proteome</keyword>
<keyword id="KW-0677">Repeat</keyword>
<keyword id="KW-0694">RNA-binding</keyword>
<keyword id="KW-0804">Transcription</keyword>
<keyword id="KW-0805">Transcription regulation</keyword>
<keyword id="KW-0813">Transport</keyword>
<keyword id="KW-0832">Ubl conjugation</keyword>
<dbReference type="EMBL" id="AF308818">
    <property type="protein sequence ID" value="AAG59811.1"/>
    <property type="molecule type" value="mRNA"/>
</dbReference>
<dbReference type="RefSeq" id="NP_598286.1">
    <property type="nucleotide sequence ID" value="NM_133602.1"/>
</dbReference>
<dbReference type="SMR" id="Q99PF5"/>
<dbReference type="BioGRID" id="251142">
    <property type="interactions" value="1"/>
</dbReference>
<dbReference type="CORUM" id="Q99PF5"/>
<dbReference type="FunCoup" id="Q99PF5">
    <property type="interactions" value="3632"/>
</dbReference>
<dbReference type="STRING" id="10116.ENSRNOP00000072174"/>
<dbReference type="iPTMnet" id="Q99PF5"/>
<dbReference type="PhosphoSitePlus" id="Q99PF5"/>
<dbReference type="SwissPalm" id="Q99PF5"/>
<dbReference type="REPRODUCTION-2DPAGE" id="Q99PF5"/>
<dbReference type="jPOST" id="Q99PF5"/>
<dbReference type="PaxDb" id="10116-ENSRNOP00000066023"/>
<dbReference type="AGR" id="RGD:621828"/>
<dbReference type="RGD" id="621828">
    <property type="gene designation" value="Khsrp"/>
</dbReference>
<dbReference type="eggNOG" id="KOG1676">
    <property type="taxonomic scope" value="Eukaryota"/>
</dbReference>
<dbReference type="InParanoid" id="Q99PF5"/>
<dbReference type="PhylomeDB" id="Q99PF5"/>
<dbReference type="Reactome" id="R-RNO-450604">
    <property type="pathway name" value="KSRP (KHSRP) binds and destabilizes mRNA"/>
</dbReference>
<dbReference type="PRO" id="PR:Q99PF5"/>
<dbReference type="Proteomes" id="UP000002494">
    <property type="component" value="Unplaced"/>
</dbReference>
<dbReference type="GO" id="GO:0005737">
    <property type="term" value="C:cytoplasm"/>
    <property type="evidence" value="ECO:0000318"/>
    <property type="project" value="GO_Central"/>
</dbReference>
<dbReference type="GO" id="GO:0010494">
    <property type="term" value="C:cytoplasmic stress granule"/>
    <property type="evidence" value="ECO:0000266"/>
    <property type="project" value="RGD"/>
</dbReference>
<dbReference type="GO" id="GO:0030425">
    <property type="term" value="C:dendrite"/>
    <property type="evidence" value="ECO:0000314"/>
    <property type="project" value="RGD"/>
</dbReference>
<dbReference type="GO" id="GO:0043025">
    <property type="term" value="C:neuronal cell body"/>
    <property type="evidence" value="ECO:0000314"/>
    <property type="project" value="RGD"/>
</dbReference>
<dbReference type="GO" id="GO:0005634">
    <property type="term" value="C:nucleus"/>
    <property type="evidence" value="ECO:0000318"/>
    <property type="project" value="GO_Central"/>
</dbReference>
<dbReference type="GO" id="GO:0003677">
    <property type="term" value="F:DNA binding"/>
    <property type="evidence" value="ECO:0007669"/>
    <property type="project" value="UniProtKB-KW"/>
</dbReference>
<dbReference type="GO" id="GO:0035925">
    <property type="term" value="F:mRNA 3'-UTR AU-rich region binding"/>
    <property type="evidence" value="ECO:0000250"/>
    <property type="project" value="UniProtKB"/>
</dbReference>
<dbReference type="GO" id="GO:0003730">
    <property type="term" value="F:mRNA 3'-UTR binding"/>
    <property type="evidence" value="ECO:0000314"/>
    <property type="project" value="RGD"/>
</dbReference>
<dbReference type="GO" id="GO:0003729">
    <property type="term" value="F:mRNA binding"/>
    <property type="evidence" value="ECO:0000266"/>
    <property type="project" value="RGD"/>
</dbReference>
<dbReference type="GO" id="GO:0044183">
    <property type="term" value="F:protein folding chaperone"/>
    <property type="evidence" value="ECO:0000266"/>
    <property type="project" value="RGD"/>
</dbReference>
<dbReference type="GO" id="GO:0061158">
    <property type="term" value="P:3'-UTR-mediated mRNA destabilization"/>
    <property type="evidence" value="ECO:0000250"/>
    <property type="project" value="UniProtKB"/>
</dbReference>
<dbReference type="GO" id="GO:0071345">
    <property type="term" value="P:cellular response to cytokine stimulus"/>
    <property type="evidence" value="ECO:0000250"/>
    <property type="project" value="UniProtKB"/>
</dbReference>
<dbReference type="GO" id="GO:0010586">
    <property type="term" value="P:miRNA metabolic process"/>
    <property type="evidence" value="ECO:0000250"/>
    <property type="project" value="UniProtKB"/>
</dbReference>
<dbReference type="GO" id="GO:0006402">
    <property type="term" value="P:mRNA catabolic process"/>
    <property type="evidence" value="ECO:0000266"/>
    <property type="project" value="RGD"/>
</dbReference>
<dbReference type="GO" id="GO:0006397">
    <property type="term" value="P:mRNA processing"/>
    <property type="evidence" value="ECO:0007669"/>
    <property type="project" value="UniProtKB-KW"/>
</dbReference>
<dbReference type="GO" id="GO:0051028">
    <property type="term" value="P:mRNA transport"/>
    <property type="evidence" value="ECO:0007669"/>
    <property type="project" value="UniProtKB-KW"/>
</dbReference>
<dbReference type="GO" id="GO:0010989">
    <property type="term" value="P:negative regulation of low-density lipoprotein particle clearance"/>
    <property type="evidence" value="ECO:0000266"/>
    <property type="project" value="RGD"/>
</dbReference>
<dbReference type="GO" id="GO:0045019">
    <property type="term" value="P:negative regulation of nitric oxide biosynthetic process"/>
    <property type="evidence" value="ECO:0000250"/>
    <property type="project" value="UniProtKB"/>
</dbReference>
<dbReference type="GO" id="GO:0061014">
    <property type="term" value="P:positive regulation of mRNA catabolic process"/>
    <property type="evidence" value="ECO:0000250"/>
    <property type="project" value="UniProtKB"/>
</dbReference>
<dbReference type="GO" id="GO:2000628">
    <property type="term" value="P:regulation of miRNA metabolic process"/>
    <property type="evidence" value="ECO:0000266"/>
    <property type="project" value="RGD"/>
</dbReference>
<dbReference type="GO" id="GO:0043488">
    <property type="term" value="P:regulation of mRNA stability"/>
    <property type="evidence" value="ECO:0000250"/>
    <property type="project" value="UniProtKB"/>
</dbReference>
<dbReference type="GO" id="GO:0006357">
    <property type="term" value="P:regulation of transcription by RNA polymerase II"/>
    <property type="evidence" value="ECO:0000318"/>
    <property type="project" value="GO_Central"/>
</dbReference>
<dbReference type="GO" id="GO:0008380">
    <property type="term" value="P:RNA splicing"/>
    <property type="evidence" value="ECO:0007669"/>
    <property type="project" value="UniProtKB-KW"/>
</dbReference>
<dbReference type="CDD" id="cd22479">
    <property type="entry name" value="KH-I_FUBP2_rpt1"/>
    <property type="match status" value="1"/>
</dbReference>
<dbReference type="CDD" id="cd22482">
    <property type="entry name" value="KH-I_FUBP2_rpt2"/>
    <property type="match status" value="1"/>
</dbReference>
<dbReference type="CDD" id="cd22485">
    <property type="entry name" value="KH-I_FUBP2_rpt3"/>
    <property type="match status" value="1"/>
</dbReference>
<dbReference type="CDD" id="cd22488">
    <property type="entry name" value="KH-I_FUBP2_rpt4"/>
    <property type="match status" value="1"/>
</dbReference>
<dbReference type="FunFam" id="3.30.1370.10:FF:000007">
    <property type="entry name" value="far upstream element-binding protein 1 isoform X1"/>
    <property type="match status" value="1"/>
</dbReference>
<dbReference type="FunFam" id="3.30.1370.10:FF:000008">
    <property type="entry name" value="far upstream element-binding protein 1 isoform X1"/>
    <property type="match status" value="1"/>
</dbReference>
<dbReference type="FunFam" id="3.30.1370.10:FF:000010">
    <property type="entry name" value="far upstream element-binding protein 1 isoform X1"/>
    <property type="match status" value="1"/>
</dbReference>
<dbReference type="FunFam" id="3.30.1370.10:FF:000049">
    <property type="entry name" value="far upstream element-binding protein 2"/>
    <property type="match status" value="1"/>
</dbReference>
<dbReference type="Gene3D" id="3.30.1370.10">
    <property type="entry name" value="K Homology domain, type 1"/>
    <property type="match status" value="4"/>
</dbReference>
<dbReference type="InterPro" id="IPR015096">
    <property type="entry name" value="FUBP_C"/>
</dbReference>
<dbReference type="InterPro" id="IPR047372">
    <property type="entry name" value="KH-I_FUBP2_rpt1"/>
</dbReference>
<dbReference type="InterPro" id="IPR047369">
    <property type="entry name" value="KH-I_FUBP2_rpt2"/>
</dbReference>
<dbReference type="InterPro" id="IPR047370">
    <property type="entry name" value="KH-I_FUBP2_rpt3"/>
</dbReference>
<dbReference type="InterPro" id="IPR047371">
    <property type="entry name" value="KH-I_FUBP2_rpt4"/>
</dbReference>
<dbReference type="InterPro" id="IPR004087">
    <property type="entry name" value="KH_dom"/>
</dbReference>
<dbReference type="InterPro" id="IPR004088">
    <property type="entry name" value="KH_dom_type_1"/>
</dbReference>
<dbReference type="InterPro" id="IPR036612">
    <property type="entry name" value="KH_dom_type_1_sf"/>
</dbReference>
<dbReference type="PANTHER" id="PTHR10288">
    <property type="entry name" value="KH DOMAIN CONTAINING RNA BINDING PROTEIN"/>
    <property type="match status" value="1"/>
</dbReference>
<dbReference type="Pfam" id="PF09005">
    <property type="entry name" value="FUBP_C"/>
    <property type="match status" value="2"/>
</dbReference>
<dbReference type="Pfam" id="PF00013">
    <property type="entry name" value="KH_1"/>
    <property type="match status" value="4"/>
</dbReference>
<dbReference type="SMART" id="SM00322">
    <property type="entry name" value="KH"/>
    <property type="match status" value="4"/>
</dbReference>
<dbReference type="SUPFAM" id="SSF54791">
    <property type="entry name" value="Eukaryotic type KH-domain (KH-domain type I)"/>
    <property type="match status" value="4"/>
</dbReference>
<dbReference type="PROSITE" id="PS50084">
    <property type="entry name" value="KH_TYPE_1"/>
    <property type="match status" value="4"/>
</dbReference>
<name>FUBP2_RAT</name>
<evidence type="ECO:0000250" key="1"/>
<evidence type="ECO:0000250" key="2">
    <source>
        <dbReference type="UniProtKB" id="Q3U0V1"/>
    </source>
</evidence>
<evidence type="ECO:0000250" key="3">
    <source>
        <dbReference type="UniProtKB" id="Q92945"/>
    </source>
</evidence>
<evidence type="ECO:0000255" key="4">
    <source>
        <dbReference type="PROSITE-ProRule" id="PRU00117"/>
    </source>
</evidence>
<evidence type="ECO:0000256" key="5">
    <source>
        <dbReference type="SAM" id="MobiDB-lite"/>
    </source>
</evidence>
<evidence type="ECO:0000269" key="6">
    <source>
    </source>
</evidence>
<evidence type="ECO:0000305" key="7"/>
<evidence type="ECO:0007744" key="8">
    <source>
    </source>
</evidence>
<sequence length="721" mass="74226">MSDYSTGGPPPGPPPPAGGGGGAAGAGGGPPPGPPGAGDRGGGGPGGGGPGGGGASGGPSQPPGGGGPGIRKDAFADAVQRARQIAAKIGGDAATTVNNNTPDFGFGGQKRQLEDGDQPDSKKLASQGDSIGSQLGPIHPPPRTSMTEEYRVPDGMVGLIIGRGGEQINKIQQDSGCKVQISPDSGGLPERSVSLTGAPESVQKAKMMLDDIVSRGRGGPPGQFHDNANGGQNGTVQEIMIPAGKAGLVIGKGGETIKQLQERAGVKMILIQDGSQNTNVDKPLRIIGDPYKVQQACEMVMDILRERDQGGFGDRNEYGSRVGGGIDVPVPRHSVGVVIGRSGEMIKKIQNDAGVRIQFKQDDGTGPEKIAHIMGPPDRCEHAARIINDLLQSLRSGPPGPPGAPGMPPGGRGRGRGQGNWGPPGGEMTFSIPTHKCGLVIGRGGENVKAINQQTGAFVEISRQLPPNGDPNFKLFVIRGSPQQIDHAKQLIEEKIEGPLCPVGPGPGGPGPAGPMGPFHPGPFNQGPPGAPPHAGGPPPHQYPPQGWGNTYPEWQPPAPHDPNKAAAAATDPNAAWAAYYSHYYQQPPGPVPGPAPAPAAPPAQGEPPQPPPTGQSDYTKAWEEYYKKIGQQPQQPGAPPQQDYTKAWEEYYKKQAQVATGGGPGAPPGSQPDYSAAWAEYYRQQAAYYGQTPGPGGPQPPSTQQGQQQATEANGYELHL</sequence>
<feature type="initiator methionine" description="Removed" evidence="3">
    <location>
        <position position="1"/>
    </location>
</feature>
<feature type="chain" id="PRO_0000050138" description="Far upstream element-binding protein 2">
    <location>
        <begin position="2"/>
        <end position="721"/>
    </location>
</feature>
<feature type="domain" description="KH 1" evidence="4">
    <location>
        <begin position="145"/>
        <end position="209"/>
    </location>
</feature>
<feature type="domain" description="KH 2" evidence="4">
    <location>
        <begin position="234"/>
        <end position="300"/>
    </location>
</feature>
<feature type="domain" description="KH 3" evidence="4">
    <location>
        <begin position="323"/>
        <end position="387"/>
    </location>
</feature>
<feature type="domain" description="KH 4" evidence="4">
    <location>
        <begin position="425"/>
        <end position="492"/>
    </location>
</feature>
<feature type="repeat" description="1">
    <location>
        <begin position="572"/>
        <end position="583"/>
    </location>
</feature>
<feature type="repeat" description="2">
    <location>
        <begin position="618"/>
        <end position="629"/>
    </location>
</feature>
<feature type="repeat" description="3">
    <location>
        <begin position="644"/>
        <end position="655"/>
    </location>
</feature>
<feature type="repeat" description="4">
    <location>
        <begin position="674"/>
        <end position="685"/>
    </location>
</feature>
<feature type="region of interest" description="Disordered" evidence="5">
    <location>
        <begin position="1"/>
        <end position="148"/>
    </location>
</feature>
<feature type="region of interest" description="Disordered" evidence="5">
    <location>
        <begin position="394"/>
        <end position="422"/>
    </location>
</feature>
<feature type="region of interest" description="Disordered" evidence="5">
    <location>
        <begin position="498"/>
        <end position="570"/>
    </location>
</feature>
<feature type="region of interest" description="4 X 12 AA imperfect repeats">
    <location>
        <begin position="572"/>
        <end position="685"/>
    </location>
</feature>
<feature type="region of interest" description="Disordered" evidence="5">
    <location>
        <begin position="588"/>
        <end position="650"/>
    </location>
</feature>
<feature type="region of interest" description="Disordered" evidence="5">
    <location>
        <begin position="659"/>
        <end position="678"/>
    </location>
</feature>
<feature type="region of interest" description="Disordered" evidence="5">
    <location>
        <begin position="688"/>
        <end position="721"/>
    </location>
</feature>
<feature type="compositionally biased region" description="Pro residues" evidence="5">
    <location>
        <begin position="8"/>
        <end position="17"/>
    </location>
</feature>
<feature type="compositionally biased region" description="Gly residues" evidence="5">
    <location>
        <begin position="18"/>
        <end position="28"/>
    </location>
</feature>
<feature type="compositionally biased region" description="Gly residues" evidence="5">
    <location>
        <begin position="36"/>
        <end position="69"/>
    </location>
</feature>
<feature type="compositionally biased region" description="Basic and acidic residues" evidence="5">
    <location>
        <begin position="111"/>
        <end position="123"/>
    </location>
</feature>
<feature type="compositionally biased region" description="Pro residues" evidence="5">
    <location>
        <begin position="398"/>
        <end position="408"/>
    </location>
</feature>
<feature type="compositionally biased region" description="Gly residues" evidence="5">
    <location>
        <begin position="409"/>
        <end position="422"/>
    </location>
</feature>
<feature type="compositionally biased region" description="Pro residues" evidence="5">
    <location>
        <begin position="502"/>
        <end position="521"/>
    </location>
</feature>
<feature type="compositionally biased region" description="Pro residues" evidence="5">
    <location>
        <begin position="529"/>
        <end position="543"/>
    </location>
</feature>
<feature type="compositionally biased region" description="Pro residues" evidence="5">
    <location>
        <begin position="588"/>
        <end position="614"/>
    </location>
</feature>
<feature type="modified residue" description="N-acetylserine" evidence="3">
    <location>
        <position position="2"/>
    </location>
</feature>
<feature type="modified residue" description="Omega-N-methylarginine" evidence="2">
    <location>
        <position position="40"/>
    </location>
</feature>
<feature type="modified residue" description="N6-acetyllysine" evidence="2">
    <location>
        <position position="88"/>
    </location>
</feature>
<feature type="modified residue" description="Phosphothreonine" evidence="3">
    <location>
        <position position="101"/>
    </location>
</feature>
<feature type="modified residue" description="Phosphoserine" evidence="3">
    <location>
        <position position="126"/>
    </location>
</feature>
<feature type="modified residue" description="Phosphoserine" evidence="3">
    <location>
        <position position="130"/>
    </location>
</feature>
<feature type="modified residue" description="Phosphoserine" evidence="8">
    <location>
        <position position="182"/>
    </location>
</feature>
<feature type="modified residue" description="Phosphoserine" evidence="8">
    <location>
        <position position="185"/>
    </location>
</feature>
<feature type="modified residue" description="Phosphoserine" evidence="3">
    <location>
        <position position="194"/>
    </location>
</feature>
<feature type="modified residue" description="Phosphoserine" evidence="3">
    <location>
        <position position="275"/>
    </location>
</feature>
<feature type="modified residue" description="Omega-N-methylarginine" evidence="3">
    <location>
        <position position="412"/>
    </location>
</feature>
<feature type="modified residue" description="Omega-N-methylarginine" evidence="3">
    <location>
        <position position="414"/>
    </location>
</feature>
<feature type="modified residue" description="Omega-N-methylarginine" evidence="3">
    <location>
        <position position="416"/>
    </location>
</feature>
<feature type="modified residue" description="Omega-N-methylarginine" evidence="3">
    <location>
        <position position="443"/>
    </location>
</feature>
<feature type="modified residue" description="Phosphoserine" evidence="3">
    <location>
        <position position="481"/>
    </location>
</feature>
<feature type="cross-link" description="Glycyl lysine isopeptide (Lys-Gly) (interchain with G-Cter in SUMO1); alternate" evidence="3">
    <location>
        <position position="122"/>
    </location>
</feature>
<feature type="cross-link" description="Glycyl lysine isopeptide (Lys-Gly) (interchain with G-Cter in SUMO2); alternate" evidence="3">
    <location>
        <position position="122"/>
    </location>
</feature>
<accession>Q99PF5</accession>
<reference key="1">
    <citation type="journal article" date="2002" name="J. Neurochem.">
        <title>Molecular characterization of MARTA1, a protein interacting with the dendritic targeting element of MAP2 mRNAs.</title>
        <authorList>
            <person name="Rehbein M."/>
            <person name="Wege K."/>
            <person name="Buck F."/>
            <person name="Schweizer M."/>
            <person name="Richter D."/>
            <person name="Kindler S."/>
        </authorList>
    </citation>
    <scope>NUCLEOTIDE SEQUENCE [MRNA]</scope>
    <scope>PROTEIN SEQUENCE OF 73-87; 89-108 AND 475-486</scope>
    <scope>SUBCELLULAR LOCATION</scope>
    <scope>FUNCTION</scope>
    <source>
        <tissue>Brain</tissue>
    </source>
</reference>
<reference key="2">
    <citation type="journal article" date="2012" name="Nat. Commun.">
        <title>Quantitative maps of protein phosphorylation sites across 14 different rat organs and tissues.</title>
        <authorList>
            <person name="Lundby A."/>
            <person name="Secher A."/>
            <person name="Lage K."/>
            <person name="Nordsborg N.B."/>
            <person name="Dmytriyev A."/>
            <person name="Lundby C."/>
            <person name="Olsen J.V."/>
        </authorList>
    </citation>
    <scope>PHOSPHORYLATION [LARGE SCALE ANALYSIS] AT SER-182 AND SER-185</scope>
    <scope>IDENTIFICATION BY MASS SPECTROMETRY [LARGE SCALE ANALYSIS]</scope>
</reference>
<protein>
    <recommendedName>
        <fullName>Far upstream element-binding protein 2</fullName>
        <shortName>FUSE-binding protein 2</shortName>
    </recommendedName>
    <alternativeName>
        <fullName>KH type-splicing regulatory protein</fullName>
        <shortName>KSRP</shortName>
    </alternativeName>
    <alternativeName>
        <fullName>MAP2 RNA trans-acting protein 1</fullName>
        <shortName>MARTA1</shortName>
    </alternativeName>
</protein>
<organism>
    <name type="scientific">Rattus norvegicus</name>
    <name type="common">Rat</name>
    <dbReference type="NCBI Taxonomy" id="10116"/>
    <lineage>
        <taxon>Eukaryota</taxon>
        <taxon>Metazoa</taxon>
        <taxon>Chordata</taxon>
        <taxon>Craniata</taxon>
        <taxon>Vertebrata</taxon>
        <taxon>Euteleostomi</taxon>
        <taxon>Mammalia</taxon>
        <taxon>Eutheria</taxon>
        <taxon>Euarchontoglires</taxon>
        <taxon>Glires</taxon>
        <taxon>Rodentia</taxon>
        <taxon>Myomorpha</taxon>
        <taxon>Muroidea</taxon>
        <taxon>Muridae</taxon>
        <taxon>Murinae</taxon>
        <taxon>Rattus</taxon>
    </lineage>
</organism>